<name>FRMA_ECO24</name>
<keyword id="KW-0963">Cytoplasm</keyword>
<keyword id="KW-0479">Metal-binding</keyword>
<keyword id="KW-0520">NAD</keyword>
<keyword id="KW-0560">Oxidoreductase</keyword>
<keyword id="KW-1185">Reference proteome</keyword>
<keyword id="KW-0862">Zinc</keyword>
<accession>A7ZIA4</accession>
<organism>
    <name type="scientific">Escherichia coli O139:H28 (strain E24377A / ETEC)</name>
    <dbReference type="NCBI Taxonomy" id="331111"/>
    <lineage>
        <taxon>Bacteria</taxon>
        <taxon>Pseudomonadati</taxon>
        <taxon>Pseudomonadota</taxon>
        <taxon>Gammaproteobacteria</taxon>
        <taxon>Enterobacterales</taxon>
        <taxon>Enterobacteriaceae</taxon>
        <taxon>Escherichia</taxon>
    </lineage>
</organism>
<gene>
    <name type="primary">frmA</name>
    <name type="ordered locus">EcE24377A_0381</name>
</gene>
<sequence>MKSRAAVAFAPGKPLEIVEIDVAPPKKGEVLIKVTHTGVCHTDAFTLSGDDPEGVFPVVLGHEGAGVVVEVGEGVTSVKPGDHVIPLYTAECGECEFCRSGKTNLCVAVRETQGKGLMPDGTTRFSYNGQPLYHYMGCSTFSEYTVVAEVSLAKINPEANHEHVCLLGCGVTTGIGAVHNTAKVQPGDSVAVFGLGAIGLAVVQGARQAKAGRIIAIDTNPKKFDLARRFGATDCINPNDYDKPIKDVLLDINKWGIDHTFECIGNVNVMRAALESAHRGWGQSVIIGVAGSGQEISTRPFQLVTGRVWKGSAFGGVKGRSQLPGMVEDAMKGDIDLEPFVTHTMSLDEINDAFDLMHEGKSIRTVIRY</sequence>
<comment type="function">
    <text evidence="2">Has high formaldehyde dehydrogenase activity in the presence of glutathione and catalyzes the oxidation of normal alcohols in a reaction that is not GSH-dependent. In addition, hemithiolacetals other than those formed from GSH, including omega-thiol fatty acids, also are substrates. Also acts as a S-nitroso-glutathione reductase by catalyzing the NADH-dependent reduction of S-nitrosoglutathione.</text>
</comment>
<comment type="catalytic activity">
    <reaction evidence="2">
        <text>S-(hydroxymethyl)glutathione + NADP(+) = S-formylglutathione + NADPH + H(+)</text>
        <dbReference type="Rhea" id="RHEA:19981"/>
        <dbReference type="ChEBI" id="CHEBI:15378"/>
        <dbReference type="ChEBI" id="CHEBI:57688"/>
        <dbReference type="ChEBI" id="CHEBI:57783"/>
        <dbReference type="ChEBI" id="CHEBI:58349"/>
        <dbReference type="ChEBI" id="CHEBI:58758"/>
        <dbReference type="EC" id="1.1.1.284"/>
    </reaction>
</comment>
<comment type="catalytic activity">
    <reaction evidence="2">
        <text>S-(hydroxymethyl)glutathione + NAD(+) = S-formylglutathione + NADH + H(+)</text>
        <dbReference type="Rhea" id="RHEA:19985"/>
        <dbReference type="ChEBI" id="CHEBI:15378"/>
        <dbReference type="ChEBI" id="CHEBI:57540"/>
        <dbReference type="ChEBI" id="CHEBI:57688"/>
        <dbReference type="ChEBI" id="CHEBI:57945"/>
        <dbReference type="ChEBI" id="CHEBI:58758"/>
        <dbReference type="EC" id="1.1.1.284"/>
    </reaction>
</comment>
<comment type="catalytic activity">
    <reaction evidence="2">
        <text>a primary alcohol + NAD(+) = an aldehyde + NADH + H(+)</text>
        <dbReference type="Rhea" id="RHEA:10736"/>
        <dbReference type="ChEBI" id="CHEBI:15378"/>
        <dbReference type="ChEBI" id="CHEBI:15734"/>
        <dbReference type="ChEBI" id="CHEBI:17478"/>
        <dbReference type="ChEBI" id="CHEBI:57540"/>
        <dbReference type="ChEBI" id="CHEBI:57945"/>
        <dbReference type="EC" id="1.1.1.1"/>
    </reaction>
</comment>
<comment type="catalytic activity">
    <reaction evidence="2">
        <text>a secondary alcohol + NAD(+) = a ketone + NADH + H(+)</text>
        <dbReference type="Rhea" id="RHEA:10740"/>
        <dbReference type="ChEBI" id="CHEBI:15378"/>
        <dbReference type="ChEBI" id="CHEBI:17087"/>
        <dbReference type="ChEBI" id="CHEBI:35681"/>
        <dbReference type="ChEBI" id="CHEBI:57540"/>
        <dbReference type="ChEBI" id="CHEBI:57945"/>
        <dbReference type="EC" id="1.1.1.1"/>
    </reaction>
</comment>
<comment type="catalytic activity">
    <reaction evidence="2">
        <text>S-nitrosoglutathione + NADH + H(+) = S-(hydroxysulfenamide)glutathione + NAD(+)</text>
        <dbReference type="Rhea" id="RHEA:78371"/>
        <dbReference type="ChEBI" id="CHEBI:15378"/>
        <dbReference type="ChEBI" id="CHEBI:57540"/>
        <dbReference type="ChEBI" id="CHEBI:57945"/>
        <dbReference type="ChEBI" id="CHEBI:145544"/>
        <dbReference type="ChEBI" id="CHEBI:229723"/>
    </reaction>
    <physiologicalReaction direction="left-to-right" evidence="2">
        <dbReference type="Rhea" id="RHEA:78372"/>
    </physiologicalReaction>
</comment>
<comment type="cofactor">
    <cofactor evidence="1">
        <name>Zn(2+)</name>
        <dbReference type="ChEBI" id="CHEBI:29105"/>
    </cofactor>
    <text evidence="1">Binds 2 Zn(2+) ions per subunit.</text>
</comment>
<comment type="subunit">
    <text evidence="2">Homodimer.</text>
</comment>
<comment type="subcellular location">
    <subcellularLocation>
        <location evidence="2">Cytoplasm</location>
    </subcellularLocation>
</comment>
<comment type="similarity">
    <text evidence="3">Belongs to the zinc-containing alcohol dehydrogenase family. Class-III subfamily.</text>
</comment>
<proteinExistence type="inferred from homology"/>
<protein>
    <recommendedName>
        <fullName>S-(hydroxymethyl)glutathione dehydrogenase</fullName>
        <ecNumber>1.1.1.284</ecNumber>
    </recommendedName>
    <alternativeName>
        <fullName>Alcohol dehydrogenase class-3</fullName>
        <ecNumber>1.1.1.1</ecNumber>
    </alternativeName>
    <alternativeName>
        <fullName>Alcohol dehydrogenase class-III</fullName>
    </alternativeName>
    <alternativeName>
        <fullName>Glutathione-dependent formaldehyde dehydrogenase</fullName>
        <shortName>FALDH</shortName>
        <shortName>FDH</shortName>
        <shortName>GSH-FDH</shortName>
        <ecNumber>1.1.1.-</ecNumber>
    </alternativeName>
</protein>
<evidence type="ECO:0000250" key="1">
    <source>
        <dbReference type="UniProtKB" id="P11766"/>
    </source>
</evidence>
<evidence type="ECO:0000250" key="2">
    <source>
        <dbReference type="UniProtKB" id="P25437"/>
    </source>
</evidence>
<evidence type="ECO:0000305" key="3"/>
<dbReference type="EC" id="1.1.1.284"/>
<dbReference type="EC" id="1.1.1.1"/>
<dbReference type="EC" id="1.1.1.-"/>
<dbReference type="EMBL" id="CP000800">
    <property type="protein sequence ID" value="ABV17265.1"/>
    <property type="molecule type" value="Genomic_DNA"/>
</dbReference>
<dbReference type="RefSeq" id="WP_000842102.1">
    <property type="nucleotide sequence ID" value="NC_009801.1"/>
</dbReference>
<dbReference type="SMR" id="A7ZIA4"/>
<dbReference type="GeneID" id="93777099"/>
<dbReference type="KEGG" id="ecw:EcE24377A_0381"/>
<dbReference type="HOGENOM" id="CLU_026673_14_0_6"/>
<dbReference type="Proteomes" id="UP000001122">
    <property type="component" value="Chromosome"/>
</dbReference>
<dbReference type="GO" id="GO:0005829">
    <property type="term" value="C:cytosol"/>
    <property type="evidence" value="ECO:0007669"/>
    <property type="project" value="TreeGrafter"/>
</dbReference>
<dbReference type="GO" id="GO:0004022">
    <property type="term" value="F:alcohol dehydrogenase (NAD+) activity"/>
    <property type="evidence" value="ECO:0007669"/>
    <property type="project" value="UniProtKB-EC"/>
</dbReference>
<dbReference type="GO" id="GO:0106322">
    <property type="term" value="F:S-(hydroxymethyl)glutathione dehydrogenase (NAD+) activity"/>
    <property type="evidence" value="ECO:0007669"/>
    <property type="project" value="RHEA"/>
</dbReference>
<dbReference type="GO" id="GO:0106321">
    <property type="term" value="F:S-(hydroxymethyl)glutathione dehydrogenase (NADP+) activity"/>
    <property type="evidence" value="ECO:0007669"/>
    <property type="project" value="RHEA"/>
</dbReference>
<dbReference type="GO" id="GO:0080007">
    <property type="term" value="F:S-nitrosoglutathione reductase (NADH) activity"/>
    <property type="evidence" value="ECO:0007669"/>
    <property type="project" value="RHEA"/>
</dbReference>
<dbReference type="GO" id="GO:0008270">
    <property type="term" value="F:zinc ion binding"/>
    <property type="evidence" value="ECO:0007669"/>
    <property type="project" value="InterPro"/>
</dbReference>
<dbReference type="GO" id="GO:0046294">
    <property type="term" value="P:formaldehyde catabolic process"/>
    <property type="evidence" value="ECO:0007669"/>
    <property type="project" value="InterPro"/>
</dbReference>
<dbReference type="CDD" id="cd08300">
    <property type="entry name" value="alcohol_DH_class_III"/>
    <property type="match status" value="1"/>
</dbReference>
<dbReference type="FunFam" id="3.40.50.720:FF:000003">
    <property type="entry name" value="S-(hydroxymethyl)glutathione dehydrogenase"/>
    <property type="match status" value="1"/>
</dbReference>
<dbReference type="FunFam" id="3.90.180.10:FF:000001">
    <property type="entry name" value="S-(hydroxymethyl)glutathione dehydrogenase"/>
    <property type="match status" value="1"/>
</dbReference>
<dbReference type="Gene3D" id="3.90.180.10">
    <property type="entry name" value="Medium-chain alcohol dehydrogenases, catalytic domain"/>
    <property type="match status" value="1"/>
</dbReference>
<dbReference type="Gene3D" id="3.40.50.720">
    <property type="entry name" value="NAD(P)-binding Rossmann-like Domain"/>
    <property type="match status" value="1"/>
</dbReference>
<dbReference type="InterPro" id="IPR013149">
    <property type="entry name" value="ADH-like_C"/>
</dbReference>
<dbReference type="InterPro" id="IPR013154">
    <property type="entry name" value="ADH-like_N"/>
</dbReference>
<dbReference type="InterPro" id="IPR014183">
    <property type="entry name" value="ADH_3"/>
</dbReference>
<dbReference type="InterPro" id="IPR002328">
    <property type="entry name" value="ADH_Zn_CS"/>
</dbReference>
<dbReference type="InterPro" id="IPR011032">
    <property type="entry name" value="GroES-like_sf"/>
</dbReference>
<dbReference type="InterPro" id="IPR036291">
    <property type="entry name" value="NAD(P)-bd_dom_sf"/>
</dbReference>
<dbReference type="InterPro" id="IPR020843">
    <property type="entry name" value="PKS_ER"/>
</dbReference>
<dbReference type="NCBIfam" id="TIGR02818">
    <property type="entry name" value="adh_III_F_hyde"/>
    <property type="match status" value="1"/>
</dbReference>
<dbReference type="PANTHER" id="PTHR43880">
    <property type="entry name" value="ALCOHOL DEHYDROGENASE"/>
    <property type="match status" value="1"/>
</dbReference>
<dbReference type="PANTHER" id="PTHR43880:SF12">
    <property type="entry name" value="ALCOHOL DEHYDROGENASE CLASS-3"/>
    <property type="match status" value="1"/>
</dbReference>
<dbReference type="Pfam" id="PF08240">
    <property type="entry name" value="ADH_N"/>
    <property type="match status" value="1"/>
</dbReference>
<dbReference type="Pfam" id="PF00107">
    <property type="entry name" value="ADH_zinc_N"/>
    <property type="match status" value="1"/>
</dbReference>
<dbReference type="SMART" id="SM00829">
    <property type="entry name" value="PKS_ER"/>
    <property type="match status" value="1"/>
</dbReference>
<dbReference type="SUPFAM" id="SSF50129">
    <property type="entry name" value="GroES-like"/>
    <property type="match status" value="2"/>
</dbReference>
<dbReference type="SUPFAM" id="SSF51735">
    <property type="entry name" value="NAD(P)-binding Rossmann-fold domains"/>
    <property type="match status" value="1"/>
</dbReference>
<dbReference type="PROSITE" id="PS00059">
    <property type="entry name" value="ADH_ZINC"/>
    <property type="match status" value="1"/>
</dbReference>
<feature type="chain" id="PRO_0000341286" description="S-(hydroxymethyl)glutathione dehydrogenase">
    <location>
        <begin position="1"/>
        <end position="369"/>
    </location>
</feature>
<feature type="binding site" evidence="1">
    <location>
        <position position="40"/>
    </location>
    <ligand>
        <name>Zn(2+)</name>
        <dbReference type="ChEBI" id="CHEBI:29105"/>
        <label>1</label>
        <note>catalytic</note>
    </ligand>
</feature>
<feature type="binding site" evidence="1">
    <location>
        <position position="62"/>
    </location>
    <ligand>
        <name>Zn(2+)</name>
        <dbReference type="ChEBI" id="CHEBI:29105"/>
        <label>1</label>
        <note>catalytic</note>
    </ligand>
</feature>
<feature type="binding site" evidence="1">
    <location>
        <position position="92"/>
    </location>
    <ligand>
        <name>Zn(2+)</name>
        <dbReference type="ChEBI" id="CHEBI:29105"/>
        <label>2</label>
    </ligand>
</feature>
<feature type="binding site" evidence="1">
    <location>
        <position position="95"/>
    </location>
    <ligand>
        <name>Zn(2+)</name>
        <dbReference type="ChEBI" id="CHEBI:29105"/>
        <label>2</label>
    </ligand>
</feature>
<feature type="binding site" evidence="1">
    <location>
        <position position="98"/>
    </location>
    <ligand>
        <name>Zn(2+)</name>
        <dbReference type="ChEBI" id="CHEBI:29105"/>
        <label>2</label>
    </ligand>
</feature>
<feature type="binding site" evidence="1">
    <location>
        <position position="106"/>
    </location>
    <ligand>
        <name>Zn(2+)</name>
        <dbReference type="ChEBI" id="CHEBI:29105"/>
        <label>2</label>
    </ligand>
</feature>
<feature type="binding site" evidence="1">
    <location>
        <position position="169"/>
    </location>
    <ligand>
        <name>Zn(2+)</name>
        <dbReference type="ChEBI" id="CHEBI:29105"/>
        <label>1</label>
        <note>catalytic</note>
    </ligand>
</feature>
<reference key="1">
    <citation type="journal article" date="2008" name="J. Bacteriol.">
        <title>The pangenome structure of Escherichia coli: comparative genomic analysis of E. coli commensal and pathogenic isolates.</title>
        <authorList>
            <person name="Rasko D.A."/>
            <person name="Rosovitz M.J."/>
            <person name="Myers G.S.A."/>
            <person name="Mongodin E.F."/>
            <person name="Fricke W.F."/>
            <person name="Gajer P."/>
            <person name="Crabtree J."/>
            <person name="Sebaihia M."/>
            <person name="Thomson N.R."/>
            <person name="Chaudhuri R."/>
            <person name="Henderson I.R."/>
            <person name="Sperandio V."/>
            <person name="Ravel J."/>
        </authorList>
    </citation>
    <scope>NUCLEOTIDE SEQUENCE [LARGE SCALE GENOMIC DNA]</scope>
    <source>
        <strain>E24377A / ETEC</strain>
    </source>
</reference>